<comment type="function">
    <text evidence="1">Catalyzes the reversible conversion of ribose-5-phosphate to ribulose 5-phosphate.</text>
</comment>
<comment type="catalytic activity">
    <reaction evidence="1">
        <text>aldehydo-D-ribose 5-phosphate = D-ribulose 5-phosphate</text>
        <dbReference type="Rhea" id="RHEA:14657"/>
        <dbReference type="ChEBI" id="CHEBI:58121"/>
        <dbReference type="ChEBI" id="CHEBI:58273"/>
        <dbReference type="EC" id="5.3.1.6"/>
    </reaction>
</comment>
<comment type="pathway">
    <text evidence="1">Carbohydrate degradation; pentose phosphate pathway; D-ribose 5-phosphate from D-ribulose 5-phosphate (non-oxidative stage): step 1/1.</text>
</comment>
<comment type="subunit">
    <text evidence="1">Homodimer.</text>
</comment>
<comment type="similarity">
    <text evidence="1">Belongs to the ribose 5-phosphate isomerase family.</text>
</comment>
<reference key="1">
    <citation type="journal article" date="2008" name="Genomics">
        <title>Characterization of ST-4821 complex, a unique Neisseria meningitidis clone.</title>
        <authorList>
            <person name="Peng J."/>
            <person name="Yang L."/>
            <person name="Yang F."/>
            <person name="Yang J."/>
            <person name="Yan Y."/>
            <person name="Nie H."/>
            <person name="Zhang X."/>
            <person name="Xiong Z."/>
            <person name="Jiang Y."/>
            <person name="Cheng F."/>
            <person name="Xu X."/>
            <person name="Chen S."/>
            <person name="Sun L."/>
            <person name="Li W."/>
            <person name="Shen Y."/>
            <person name="Shao Z."/>
            <person name="Liang X."/>
            <person name="Xu J."/>
            <person name="Jin Q."/>
        </authorList>
    </citation>
    <scope>NUCLEOTIDE SEQUENCE [LARGE SCALE GENOMIC DNA]</scope>
    <source>
        <strain>053442</strain>
    </source>
</reference>
<name>RPIA_NEIM0</name>
<proteinExistence type="inferred from homology"/>
<feature type="chain" id="PRO_1000077071" description="Ribose-5-phosphate isomerase A">
    <location>
        <begin position="1"/>
        <end position="223"/>
    </location>
</feature>
<feature type="active site" description="Proton acceptor" evidence="1">
    <location>
        <position position="104"/>
    </location>
</feature>
<feature type="binding site" evidence="1">
    <location>
        <begin position="29"/>
        <end position="32"/>
    </location>
    <ligand>
        <name>substrate</name>
    </ligand>
</feature>
<feature type="binding site" evidence="1">
    <location>
        <begin position="82"/>
        <end position="85"/>
    </location>
    <ligand>
        <name>substrate</name>
    </ligand>
</feature>
<feature type="binding site" evidence="1">
    <location>
        <begin position="95"/>
        <end position="98"/>
    </location>
    <ligand>
        <name>substrate</name>
    </ligand>
</feature>
<feature type="binding site" evidence="1">
    <location>
        <position position="122"/>
    </location>
    <ligand>
        <name>substrate</name>
    </ligand>
</feature>
<accession>A9M0U5</accession>
<sequence length="223" mass="23920">MTTQDELKRIAAEKAVEFVPENEYIGIGTGSTINFFIEALGKSGKKIKGAVSTSKKSSELLAQYDIPVVSLNEVSGLAVYIDGADEVNHALQMIKGGGGAHLNEKIVASASEKFVCIADESKYVSRLGKFPLPVEVVESARSLVSRKLLAMGGQPELRIGYTTFYGNQIVDVHGLNIDQPLTMEDEINKITGVLENGIFARDAADVLILGTEEGAKVIYPCQG</sequence>
<keyword id="KW-0413">Isomerase</keyword>
<protein>
    <recommendedName>
        <fullName evidence="1">Ribose-5-phosphate isomerase A</fullName>
        <ecNumber evidence="1">5.3.1.6</ecNumber>
    </recommendedName>
    <alternativeName>
        <fullName evidence="1">Phosphoriboisomerase A</fullName>
        <shortName evidence="1">PRI</shortName>
    </alternativeName>
</protein>
<organism>
    <name type="scientific">Neisseria meningitidis serogroup C (strain 053442)</name>
    <dbReference type="NCBI Taxonomy" id="374833"/>
    <lineage>
        <taxon>Bacteria</taxon>
        <taxon>Pseudomonadati</taxon>
        <taxon>Pseudomonadota</taxon>
        <taxon>Betaproteobacteria</taxon>
        <taxon>Neisseriales</taxon>
        <taxon>Neisseriaceae</taxon>
        <taxon>Neisseria</taxon>
    </lineage>
</organism>
<gene>
    <name evidence="1" type="primary">rpiA</name>
    <name type="ordered locus">NMCC_1416</name>
</gene>
<dbReference type="EC" id="5.3.1.6" evidence="1"/>
<dbReference type="EMBL" id="CP000381">
    <property type="protein sequence ID" value="ABX73585.1"/>
    <property type="molecule type" value="Genomic_DNA"/>
</dbReference>
<dbReference type="RefSeq" id="WP_002223576.1">
    <property type="nucleotide sequence ID" value="NC_010120.1"/>
</dbReference>
<dbReference type="SMR" id="A9M0U5"/>
<dbReference type="GeneID" id="93387868"/>
<dbReference type="KEGG" id="nmn:NMCC_1416"/>
<dbReference type="HOGENOM" id="CLU_056590_1_1_4"/>
<dbReference type="UniPathway" id="UPA00115">
    <property type="reaction ID" value="UER00412"/>
</dbReference>
<dbReference type="Proteomes" id="UP000001177">
    <property type="component" value="Chromosome"/>
</dbReference>
<dbReference type="GO" id="GO:0005829">
    <property type="term" value="C:cytosol"/>
    <property type="evidence" value="ECO:0007669"/>
    <property type="project" value="TreeGrafter"/>
</dbReference>
<dbReference type="GO" id="GO:0004751">
    <property type="term" value="F:ribose-5-phosphate isomerase activity"/>
    <property type="evidence" value="ECO:0007669"/>
    <property type="project" value="UniProtKB-UniRule"/>
</dbReference>
<dbReference type="GO" id="GO:0006014">
    <property type="term" value="P:D-ribose metabolic process"/>
    <property type="evidence" value="ECO:0007669"/>
    <property type="project" value="TreeGrafter"/>
</dbReference>
<dbReference type="GO" id="GO:0009052">
    <property type="term" value="P:pentose-phosphate shunt, non-oxidative branch"/>
    <property type="evidence" value="ECO:0007669"/>
    <property type="project" value="UniProtKB-UniRule"/>
</dbReference>
<dbReference type="CDD" id="cd01398">
    <property type="entry name" value="RPI_A"/>
    <property type="match status" value="1"/>
</dbReference>
<dbReference type="FunFam" id="3.40.50.1360:FF:000001">
    <property type="entry name" value="Ribose-5-phosphate isomerase A"/>
    <property type="match status" value="1"/>
</dbReference>
<dbReference type="Gene3D" id="3.30.70.260">
    <property type="match status" value="1"/>
</dbReference>
<dbReference type="Gene3D" id="3.40.50.1360">
    <property type="match status" value="1"/>
</dbReference>
<dbReference type="HAMAP" id="MF_00170">
    <property type="entry name" value="Rib_5P_isom_A"/>
    <property type="match status" value="1"/>
</dbReference>
<dbReference type="InterPro" id="IPR037171">
    <property type="entry name" value="NagB/RpiA_transferase-like"/>
</dbReference>
<dbReference type="InterPro" id="IPR020672">
    <property type="entry name" value="Ribose5P_isomerase_typA_subgr"/>
</dbReference>
<dbReference type="InterPro" id="IPR004788">
    <property type="entry name" value="Ribose5P_isomerase_type_A"/>
</dbReference>
<dbReference type="NCBIfam" id="NF001924">
    <property type="entry name" value="PRK00702.1"/>
    <property type="match status" value="1"/>
</dbReference>
<dbReference type="NCBIfam" id="TIGR00021">
    <property type="entry name" value="rpiA"/>
    <property type="match status" value="1"/>
</dbReference>
<dbReference type="PANTHER" id="PTHR11934">
    <property type="entry name" value="RIBOSE-5-PHOSPHATE ISOMERASE"/>
    <property type="match status" value="1"/>
</dbReference>
<dbReference type="PANTHER" id="PTHR11934:SF0">
    <property type="entry name" value="RIBOSE-5-PHOSPHATE ISOMERASE"/>
    <property type="match status" value="1"/>
</dbReference>
<dbReference type="Pfam" id="PF06026">
    <property type="entry name" value="Rib_5-P_isom_A"/>
    <property type="match status" value="1"/>
</dbReference>
<dbReference type="SUPFAM" id="SSF75445">
    <property type="entry name" value="D-ribose-5-phosphate isomerase (RpiA), lid domain"/>
    <property type="match status" value="1"/>
</dbReference>
<dbReference type="SUPFAM" id="SSF100950">
    <property type="entry name" value="NagB/RpiA/CoA transferase-like"/>
    <property type="match status" value="1"/>
</dbReference>
<evidence type="ECO:0000255" key="1">
    <source>
        <dbReference type="HAMAP-Rule" id="MF_00170"/>
    </source>
</evidence>